<comment type="similarity">
    <text evidence="1">Belongs to the bacterial ribosomal protein bL35 family.</text>
</comment>
<keyword id="KW-1185">Reference proteome</keyword>
<keyword id="KW-0687">Ribonucleoprotein</keyword>
<keyword id="KW-0689">Ribosomal protein</keyword>
<sequence length="64" mass="7334">MPKMKSHRGASKRFKRTASGKLKRGRAYTSHLFGNKSTKAKRKLRKASMVSSGDFKRIRHMIAK</sequence>
<reference key="1">
    <citation type="submission" date="2008-04" db="EMBL/GenBank/DDBJ databases">
        <title>Complete sequence of chromosome of Exiguobacterium sibiricum 255-15.</title>
        <authorList>
            <consortium name="US DOE Joint Genome Institute"/>
            <person name="Copeland A."/>
            <person name="Lucas S."/>
            <person name="Lapidus A."/>
            <person name="Glavina del Rio T."/>
            <person name="Dalin E."/>
            <person name="Tice H."/>
            <person name="Bruce D."/>
            <person name="Goodwin L."/>
            <person name="Pitluck S."/>
            <person name="Kiss H."/>
            <person name="Chertkov O."/>
            <person name="Monk C."/>
            <person name="Brettin T."/>
            <person name="Detter J.C."/>
            <person name="Han C."/>
            <person name="Kuske C.R."/>
            <person name="Schmutz J."/>
            <person name="Larimer F."/>
            <person name="Land M."/>
            <person name="Hauser L."/>
            <person name="Kyrpides N."/>
            <person name="Mikhailova N."/>
            <person name="Vishnivetskaya T."/>
            <person name="Rodrigues D.F."/>
            <person name="Gilichinsky D."/>
            <person name="Tiedje J."/>
            <person name="Richardson P."/>
        </authorList>
    </citation>
    <scope>NUCLEOTIDE SEQUENCE [LARGE SCALE GENOMIC DNA]</scope>
    <source>
        <strain>DSM 17290 / CCUG 55495 / CIP 109462 / JCM 13490 / 255-15</strain>
    </source>
</reference>
<accession>B1YK03</accession>
<dbReference type="EMBL" id="CP001022">
    <property type="protein sequence ID" value="ACB61641.1"/>
    <property type="molecule type" value="Genomic_DNA"/>
</dbReference>
<dbReference type="RefSeq" id="WP_012371058.1">
    <property type="nucleotide sequence ID" value="NC_010556.1"/>
</dbReference>
<dbReference type="SMR" id="B1YK03"/>
<dbReference type="STRING" id="262543.Exig_2189"/>
<dbReference type="KEGG" id="esi:Exig_2189"/>
<dbReference type="eggNOG" id="COG0291">
    <property type="taxonomic scope" value="Bacteria"/>
</dbReference>
<dbReference type="HOGENOM" id="CLU_169643_3_0_9"/>
<dbReference type="OrthoDB" id="47476at2"/>
<dbReference type="Proteomes" id="UP000001681">
    <property type="component" value="Chromosome"/>
</dbReference>
<dbReference type="GO" id="GO:0022625">
    <property type="term" value="C:cytosolic large ribosomal subunit"/>
    <property type="evidence" value="ECO:0007669"/>
    <property type="project" value="TreeGrafter"/>
</dbReference>
<dbReference type="GO" id="GO:0003735">
    <property type="term" value="F:structural constituent of ribosome"/>
    <property type="evidence" value="ECO:0007669"/>
    <property type="project" value="InterPro"/>
</dbReference>
<dbReference type="GO" id="GO:0006412">
    <property type="term" value="P:translation"/>
    <property type="evidence" value="ECO:0007669"/>
    <property type="project" value="UniProtKB-UniRule"/>
</dbReference>
<dbReference type="FunFam" id="4.10.410.60:FF:000001">
    <property type="entry name" value="50S ribosomal protein L35"/>
    <property type="match status" value="1"/>
</dbReference>
<dbReference type="Gene3D" id="4.10.410.60">
    <property type="match status" value="1"/>
</dbReference>
<dbReference type="HAMAP" id="MF_00514">
    <property type="entry name" value="Ribosomal_bL35"/>
    <property type="match status" value="1"/>
</dbReference>
<dbReference type="InterPro" id="IPR001706">
    <property type="entry name" value="Ribosomal_bL35"/>
</dbReference>
<dbReference type="InterPro" id="IPR021137">
    <property type="entry name" value="Ribosomal_bL35-like"/>
</dbReference>
<dbReference type="InterPro" id="IPR018265">
    <property type="entry name" value="Ribosomal_bL35_CS"/>
</dbReference>
<dbReference type="InterPro" id="IPR037229">
    <property type="entry name" value="Ribosomal_bL35_sf"/>
</dbReference>
<dbReference type="NCBIfam" id="TIGR00001">
    <property type="entry name" value="rpmI_bact"/>
    <property type="match status" value="1"/>
</dbReference>
<dbReference type="PANTHER" id="PTHR33343">
    <property type="entry name" value="54S RIBOSOMAL PROTEIN BL35M"/>
    <property type="match status" value="1"/>
</dbReference>
<dbReference type="PANTHER" id="PTHR33343:SF1">
    <property type="entry name" value="LARGE RIBOSOMAL SUBUNIT PROTEIN BL35M"/>
    <property type="match status" value="1"/>
</dbReference>
<dbReference type="Pfam" id="PF01632">
    <property type="entry name" value="Ribosomal_L35p"/>
    <property type="match status" value="1"/>
</dbReference>
<dbReference type="PRINTS" id="PR00064">
    <property type="entry name" value="RIBOSOMALL35"/>
</dbReference>
<dbReference type="SUPFAM" id="SSF143034">
    <property type="entry name" value="L35p-like"/>
    <property type="match status" value="1"/>
</dbReference>
<dbReference type="PROSITE" id="PS00936">
    <property type="entry name" value="RIBOSOMAL_L35"/>
    <property type="match status" value="1"/>
</dbReference>
<gene>
    <name evidence="1" type="primary">rpmI</name>
    <name type="ordered locus">Exig_2189</name>
</gene>
<feature type="chain" id="PRO_1000127354" description="Large ribosomal subunit protein bL35">
    <location>
        <begin position="1"/>
        <end position="64"/>
    </location>
</feature>
<feature type="region of interest" description="Disordered" evidence="2">
    <location>
        <begin position="1"/>
        <end position="28"/>
    </location>
</feature>
<feature type="region of interest" description="Disordered" evidence="2">
    <location>
        <begin position="33"/>
        <end position="52"/>
    </location>
</feature>
<feature type="compositionally biased region" description="Basic residues" evidence="2">
    <location>
        <begin position="1"/>
        <end position="26"/>
    </location>
</feature>
<evidence type="ECO:0000255" key="1">
    <source>
        <dbReference type="HAMAP-Rule" id="MF_00514"/>
    </source>
</evidence>
<evidence type="ECO:0000256" key="2">
    <source>
        <dbReference type="SAM" id="MobiDB-lite"/>
    </source>
</evidence>
<evidence type="ECO:0000305" key="3"/>
<proteinExistence type="inferred from homology"/>
<name>RL35_EXIS2</name>
<organism>
    <name type="scientific">Exiguobacterium sibiricum (strain DSM 17290 / CCUG 55495 / CIP 109462 / JCM 13490 / 255-15)</name>
    <dbReference type="NCBI Taxonomy" id="262543"/>
    <lineage>
        <taxon>Bacteria</taxon>
        <taxon>Bacillati</taxon>
        <taxon>Bacillota</taxon>
        <taxon>Bacilli</taxon>
        <taxon>Bacillales</taxon>
        <taxon>Bacillales Family XII. Incertae Sedis</taxon>
        <taxon>Exiguobacterium</taxon>
    </lineage>
</organism>
<protein>
    <recommendedName>
        <fullName evidence="1">Large ribosomal subunit protein bL35</fullName>
    </recommendedName>
    <alternativeName>
        <fullName evidence="3">50S ribosomal protein L35</fullName>
    </alternativeName>
</protein>